<accession>B2SGC8</accession>
<feature type="chain" id="PRO_1000094391" description="Shikimate kinase">
    <location>
        <begin position="1"/>
        <end position="176"/>
    </location>
</feature>
<feature type="binding site" evidence="1">
    <location>
        <begin position="14"/>
        <end position="19"/>
    </location>
    <ligand>
        <name>ATP</name>
        <dbReference type="ChEBI" id="CHEBI:30616"/>
    </ligand>
</feature>
<feature type="binding site" evidence="1">
    <location>
        <position position="18"/>
    </location>
    <ligand>
        <name>Mg(2+)</name>
        <dbReference type="ChEBI" id="CHEBI:18420"/>
    </ligand>
</feature>
<feature type="binding site" evidence="1">
    <location>
        <position position="36"/>
    </location>
    <ligand>
        <name>substrate</name>
    </ligand>
</feature>
<feature type="binding site" evidence="1">
    <location>
        <position position="60"/>
    </location>
    <ligand>
        <name>substrate</name>
    </ligand>
</feature>
<feature type="binding site" evidence="1">
    <location>
        <position position="83"/>
    </location>
    <ligand>
        <name>substrate</name>
    </ligand>
</feature>
<feature type="binding site" evidence="1">
    <location>
        <position position="121"/>
    </location>
    <ligand>
        <name>ATP</name>
        <dbReference type="ChEBI" id="CHEBI:30616"/>
    </ligand>
</feature>
<feature type="binding site" evidence="1">
    <location>
        <position position="140"/>
    </location>
    <ligand>
        <name>substrate</name>
    </ligand>
</feature>
<evidence type="ECO:0000255" key="1">
    <source>
        <dbReference type="HAMAP-Rule" id="MF_00109"/>
    </source>
</evidence>
<reference key="1">
    <citation type="journal article" date="2009" name="PLoS Pathog.">
        <title>Molecular evolutionary consequences of niche restriction in Francisella tularensis, a facultative intracellular pathogen.</title>
        <authorList>
            <person name="Larsson P."/>
            <person name="Elfsmark D."/>
            <person name="Svensson K."/>
            <person name="Wikstroem P."/>
            <person name="Forsman M."/>
            <person name="Brettin T."/>
            <person name="Keim P."/>
            <person name="Johansson A."/>
        </authorList>
    </citation>
    <scope>NUCLEOTIDE SEQUENCE [LARGE SCALE GENOMIC DNA]</scope>
    <source>
        <strain>FSC147</strain>
    </source>
</reference>
<protein>
    <recommendedName>
        <fullName evidence="1">Shikimate kinase</fullName>
        <shortName evidence="1">SK</shortName>
        <ecNumber evidence="1">2.7.1.71</ecNumber>
    </recommendedName>
</protein>
<comment type="function">
    <text evidence="1">Catalyzes the specific phosphorylation of the 3-hydroxyl group of shikimic acid using ATP as a cosubstrate.</text>
</comment>
<comment type="catalytic activity">
    <reaction evidence="1">
        <text>shikimate + ATP = 3-phosphoshikimate + ADP + H(+)</text>
        <dbReference type="Rhea" id="RHEA:13121"/>
        <dbReference type="ChEBI" id="CHEBI:15378"/>
        <dbReference type="ChEBI" id="CHEBI:30616"/>
        <dbReference type="ChEBI" id="CHEBI:36208"/>
        <dbReference type="ChEBI" id="CHEBI:145989"/>
        <dbReference type="ChEBI" id="CHEBI:456216"/>
        <dbReference type="EC" id="2.7.1.71"/>
    </reaction>
</comment>
<comment type="cofactor">
    <cofactor evidence="1">
        <name>Mg(2+)</name>
        <dbReference type="ChEBI" id="CHEBI:18420"/>
    </cofactor>
    <text evidence="1">Binds 1 Mg(2+) ion per subunit.</text>
</comment>
<comment type="pathway">
    <text evidence="1">Metabolic intermediate biosynthesis; chorismate biosynthesis; chorismate from D-erythrose 4-phosphate and phosphoenolpyruvate: step 5/7.</text>
</comment>
<comment type="subunit">
    <text evidence="1">Monomer.</text>
</comment>
<comment type="subcellular location">
    <subcellularLocation>
        <location evidence="1">Cytoplasm</location>
    </subcellularLocation>
</comment>
<comment type="similarity">
    <text evidence="1">Belongs to the shikimate kinase family.</text>
</comment>
<gene>
    <name evidence="1" type="primary">aroK</name>
    <name type="ordered locus">FTM_0833</name>
</gene>
<sequence>MIRTKNIFLIGPVGAGKSTIGKQLAKQLKLEFIDSDDVIEKKCGVDINWIFDLEGEEGFRKREREVIAEILAEKQNIVLATGGGAILDPETRSLLSSRGKVVYLEATIEQQLERTSKDTKRPLLRVDDKRPVLEQLMAEREPLYRSIADVVVETNGATVKNIVNKISTFLVEETIL</sequence>
<organism>
    <name type="scientific">Francisella tularensis subsp. mediasiatica (strain FSC147)</name>
    <dbReference type="NCBI Taxonomy" id="441952"/>
    <lineage>
        <taxon>Bacteria</taxon>
        <taxon>Pseudomonadati</taxon>
        <taxon>Pseudomonadota</taxon>
        <taxon>Gammaproteobacteria</taxon>
        <taxon>Thiotrichales</taxon>
        <taxon>Francisellaceae</taxon>
        <taxon>Francisella</taxon>
    </lineage>
</organism>
<keyword id="KW-0028">Amino-acid biosynthesis</keyword>
<keyword id="KW-0057">Aromatic amino acid biosynthesis</keyword>
<keyword id="KW-0067">ATP-binding</keyword>
<keyword id="KW-0963">Cytoplasm</keyword>
<keyword id="KW-0418">Kinase</keyword>
<keyword id="KW-0460">Magnesium</keyword>
<keyword id="KW-0479">Metal-binding</keyword>
<keyword id="KW-0547">Nucleotide-binding</keyword>
<keyword id="KW-0808">Transferase</keyword>
<proteinExistence type="inferred from homology"/>
<name>AROK_FRATM</name>
<dbReference type="EC" id="2.7.1.71" evidence="1"/>
<dbReference type="EMBL" id="CP000915">
    <property type="protein sequence ID" value="ACD30787.1"/>
    <property type="molecule type" value="Genomic_DNA"/>
</dbReference>
<dbReference type="SMR" id="B2SGC8"/>
<dbReference type="KEGG" id="ftm:FTM_0833"/>
<dbReference type="HOGENOM" id="CLU_057607_2_2_6"/>
<dbReference type="UniPathway" id="UPA00053">
    <property type="reaction ID" value="UER00088"/>
</dbReference>
<dbReference type="GO" id="GO:0005829">
    <property type="term" value="C:cytosol"/>
    <property type="evidence" value="ECO:0007669"/>
    <property type="project" value="TreeGrafter"/>
</dbReference>
<dbReference type="GO" id="GO:0005524">
    <property type="term" value="F:ATP binding"/>
    <property type="evidence" value="ECO:0007669"/>
    <property type="project" value="UniProtKB-UniRule"/>
</dbReference>
<dbReference type="GO" id="GO:0016887">
    <property type="term" value="F:ATP hydrolysis activity"/>
    <property type="evidence" value="ECO:0007669"/>
    <property type="project" value="InterPro"/>
</dbReference>
<dbReference type="GO" id="GO:0000287">
    <property type="term" value="F:magnesium ion binding"/>
    <property type="evidence" value="ECO:0007669"/>
    <property type="project" value="UniProtKB-UniRule"/>
</dbReference>
<dbReference type="GO" id="GO:0004765">
    <property type="term" value="F:shikimate kinase activity"/>
    <property type="evidence" value="ECO:0007669"/>
    <property type="project" value="UniProtKB-UniRule"/>
</dbReference>
<dbReference type="GO" id="GO:0008652">
    <property type="term" value="P:amino acid biosynthetic process"/>
    <property type="evidence" value="ECO:0007669"/>
    <property type="project" value="UniProtKB-KW"/>
</dbReference>
<dbReference type="GO" id="GO:0009073">
    <property type="term" value="P:aromatic amino acid family biosynthetic process"/>
    <property type="evidence" value="ECO:0007669"/>
    <property type="project" value="UniProtKB-KW"/>
</dbReference>
<dbReference type="GO" id="GO:0009423">
    <property type="term" value="P:chorismate biosynthetic process"/>
    <property type="evidence" value="ECO:0007669"/>
    <property type="project" value="UniProtKB-UniRule"/>
</dbReference>
<dbReference type="CDD" id="cd00464">
    <property type="entry name" value="SK"/>
    <property type="match status" value="1"/>
</dbReference>
<dbReference type="Gene3D" id="3.40.50.300">
    <property type="entry name" value="P-loop containing nucleotide triphosphate hydrolases"/>
    <property type="match status" value="1"/>
</dbReference>
<dbReference type="HAMAP" id="MF_00109">
    <property type="entry name" value="Shikimate_kinase"/>
    <property type="match status" value="1"/>
</dbReference>
<dbReference type="InterPro" id="IPR003593">
    <property type="entry name" value="AAA+_ATPase"/>
</dbReference>
<dbReference type="InterPro" id="IPR027417">
    <property type="entry name" value="P-loop_NTPase"/>
</dbReference>
<dbReference type="InterPro" id="IPR031322">
    <property type="entry name" value="Shikimate/glucono_kinase"/>
</dbReference>
<dbReference type="InterPro" id="IPR000623">
    <property type="entry name" value="Shikimate_kinase/TSH1"/>
</dbReference>
<dbReference type="InterPro" id="IPR023000">
    <property type="entry name" value="Shikimate_kinase_CS"/>
</dbReference>
<dbReference type="NCBIfam" id="NF003456">
    <property type="entry name" value="PRK05057.1"/>
    <property type="match status" value="1"/>
</dbReference>
<dbReference type="PANTHER" id="PTHR21087">
    <property type="entry name" value="SHIKIMATE KINASE"/>
    <property type="match status" value="1"/>
</dbReference>
<dbReference type="PANTHER" id="PTHR21087:SF16">
    <property type="entry name" value="SHIKIMATE KINASE 1, CHLOROPLASTIC"/>
    <property type="match status" value="1"/>
</dbReference>
<dbReference type="Pfam" id="PF01202">
    <property type="entry name" value="SKI"/>
    <property type="match status" value="1"/>
</dbReference>
<dbReference type="PRINTS" id="PR01100">
    <property type="entry name" value="SHIKIMTKNASE"/>
</dbReference>
<dbReference type="SMART" id="SM00382">
    <property type="entry name" value="AAA"/>
    <property type="match status" value="1"/>
</dbReference>
<dbReference type="SUPFAM" id="SSF52540">
    <property type="entry name" value="P-loop containing nucleoside triphosphate hydrolases"/>
    <property type="match status" value="1"/>
</dbReference>
<dbReference type="PROSITE" id="PS01128">
    <property type="entry name" value="SHIKIMATE_KINASE"/>
    <property type="match status" value="1"/>
</dbReference>